<name>RR11_LOTJA</name>
<reference key="1">
    <citation type="journal article" date="2000" name="DNA Res.">
        <title>Complete structure of the chloroplast genome of a legume, Lotus japonicus.</title>
        <authorList>
            <person name="Kato T."/>
            <person name="Kaneko T."/>
            <person name="Sato S."/>
            <person name="Nakamura Y."/>
            <person name="Tabata S."/>
        </authorList>
    </citation>
    <scope>NUCLEOTIDE SEQUENCE [LARGE SCALE GENOMIC DNA]</scope>
    <source>
        <strain>cv. Miyakojima MG-20</strain>
    </source>
</reference>
<proteinExistence type="inferred from homology"/>
<geneLocation type="chloroplast"/>
<keyword id="KW-0150">Chloroplast</keyword>
<keyword id="KW-0934">Plastid</keyword>
<keyword id="KW-0687">Ribonucleoprotein</keyword>
<keyword id="KW-0689">Ribosomal protein</keyword>
<keyword id="KW-0694">RNA-binding</keyword>
<keyword id="KW-0699">rRNA-binding</keyword>
<organism>
    <name type="scientific">Lotus japonicus</name>
    <name type="common">Lotus corniculatus var. japonicus</name>
    <dbReference type="NCBI Taxonomy" id="34305"/>
    <lineage>
        <taxon>Eukaryota</taxon>
        <taxon>Viridiplantae</taxon>
        <taxon>Streptophyta</taxon>
        <taxon>Embryophyta</taxon>
        <taxon>Tracheophyta</taxon>
        <taxon>Spermatophyta</taxon>
        <taxon>Magnoliopsida</taxon>
        <taxon>eudicotyledons</taxon>
        <taxon>Gunneridae</taxon>
        <taxon>Pentapetalae</taxon>
        <taxon>rosids</taxon>
        <taxon>fabids</taxon>
        <taxon>Fabales</taxon>
        <taxon>Fabaceae</taxon>
        <taxon>Papilionoideae</taxon>
        <taxon>50 kb inversion clade</taxon>
        <taxon>NPAAA clade</taxon>
        <taxon>Hologalegina</taxon>
        <taxon>robinioid clade</taxon>
        <taxon>Loteae</taxon>
        <taxon>Lotus</taxon>
    </lineage>
</organism>
<dbReference type="EMBL" id="AP002983">
    <property type="protein sequence ID" value="BAB33229.1"/>
    <property type="molecule type" value="Genomic_DNA"/>
</dbReference>
<dbReference type="RefSeq" id="NP_084830.1">
    <property type="nucleotide sequence ID" value="NC_002694.1"/>
</dbReference>
<dbReference type="SMR" id="Q9BBQ3"/>
<dbReference type="GeneID" id="802949"/>
<dbReference type="GO" id="GO:0009507">
    <property type="term" value="C:chloroplast"/>
    <property type="evidence" value="ECO:0007669"/>
    <property type="project" value="UniProtKB-SubCell"/>
</dbReference>
<dbReference type="GO" id="GO:1990904">
    <property type="term" value="C:ribonucleoprotein complex"/>
    <property type="evidence" value="ECO:0007669"/>
    <property type="project" value="UniProtKB-KW"/>
</dbReference>
<dbReference type="GO" id="GO:0005840">
    <property type="term" value="C:ribosome"/>
    <property type="evidence" value="ECO:0007669"/>
    <property type="project" value="UniProtKB-KW"/>
</dbReference>
<dbReference type="GO" id="GO:0019843">
    <property type="term" value="F:rRNA binding"/>
    <property type="evidence" value="ECO:0007669"/>
    <property type="project" value="UniProtKB-UniRule"/>
</dbReference>
<dbReference type="GO" id="GO:0003735">
    <property type="term" value="F:structural constituent of ribosome"/>
    <property type="evidence" value="ECO:0007669"/>
    <property type="project" value="InterPro"/>
</dbReference>
<dbReference type="GO" id="GO:0006412">
    <property type="term" value="P:translation"/>
    <property type="evidence" value="ECO:0007669"/>
    <property type="project" value="UniProtKB-UniRule"/>
</dbReference>
<dbReference type="FunFam" id="3.30.420.80:FF:000003">
    <property type="entry name" value="30S ribosomal protein S11, chloroplastic"/>
    <property type="match status" value="1"/>
</dbReference>
<dbReference type="Gene3D" id="3.30.420.80">
    <property type="entry name" value="Ribosomal protein S11"/>
    <property type="match status" value="1"/>
</dbReference>
<dbReference type="HAMAP" id="MF_01310">
    <property type="entry name" value="Ribosomal_uS11"/>
    <property type="match status" value="1"/>
</dbReference>
<dbReference type="InterPro" id="IPR001971">
    <property type="entry name" value="Ribosomal_uS11"/>
</dbReference>
<dbReference type="InterPro" id="IPR019981">
    <property type="entry name" value="Ribosomal_uS11_bac-type"/>
</dbReference>
<dbReference type="InterPro" id="IPR018102">
    <property type="entry name" value="Ribosomal_uS11_CS"/>
</dbReference>
<dbReference type="InterPro" id="IPR036967">
    <property type="entry name" value="Ribosomal_uS11_sf"/>
</dbReference>
<dbReference type="NCBIfam" id="NF003698">
    <property type="entry name" value="PRK05309.1"/>
    <property type="match status" value="1"/>
</dbReference>
<dbReference type="NCBIfam" id="TIGR03632">
    <property type="entry name" value="uS11_bact"/>
    <property type="match status" value="1"/>
</dbReference>
<dbReference type="PANTHER" id="PTHR11759">
    <property type="entry name" value="40S RIBOSOMAL PROTEIN S14/30S RIBOSOMAL PROTEIN S11"/>
    <property type="match status" value="1"/>
</dbReference>
<dbReference type="Pfam" id="PF00411">
    <property type="entry name" value="Ribosomal_S11"/>
    <property type="match status" value="1"/>
</dbReference>
<dbReference type="PIRSF" id="PIRSF002131">
    <property type="entry name" value="Ribosomal_S11"/>
    <property type="match status" value="1"/>
</dbReference>
<dbReference type="SUPFAM" id="SSF53137">
    <property type="entry name" value="Translational machinery components"/>
    <property type="match status" value="1"/>
</dbReference>
<dbReference type="PROSITE" id="PS00054">
    <property type="entry name" value="RIBOSOMAL_S11"/>
    <property type="match status" value="1"/>
</dbReference>
<evidence type="ECO:0000255" key="1">
    <source>
        <dbReference type="HAMAP-Rule" id="MF_01310"/>
    </source>
</evidence>
<evidence type="ECO:0000256" key="2">
    <source>
        <dbReference type="SAM" id="MobiDB-lite"/>
    </source>
</evidence>
<evidence type="ECO:0000305" key="3"/>
<accession>Q9BBQ3</accession>
<gene>
    <name evidence="1" type="primary">rps11</name>
</gene>
<protein>
    <recommendedName>
        <fullName evidence="1">Small ribosomal subunit protein uS11c</fullName>
    </recommendedName>
    <alternativeName>
        <fullName evidence="3">30S ribosomal protein S11, chloroplastic</fullName>
    </alternativeName>
</protein>
<sequence>MAKPIPKIGSRKNARSGSRKHLRKIPKGIIHVQASFNNTIVTVTDVRGRVISWSSAGTCGFKGTRRGTPFAAQTAAGNAIRTVADQGMQRAEVMIKGPGLGRDAALRAIRRSGILLNFIRDVTPMPHNGCRSPKKRRV</sequence>
<feature type="chain" id="PRO_0000123305" description="Small ribosomal subunit protein uS11c">
    <location>
        <begin position="1"/>
        <end position="138"/>
    </location>
</feature>
<feature type="region of interest" description="Disordered" evidence="2">
    <location>
        <begin position="1"/>
        <end position="22"/>
    </location>
</feature>
<feature type="compositionally biased region" description="Basic residues" evidence="2">
    <location>
        <begin position="9"/>
        <end position="22"/>
    </location>
</feature>
<comment type="subunit">
    <text evidence="1">Part of the 30S ribosomal subunit.</text>
</comment>
<comment type="subcellular location">
    <subcellularLocation>
        <location>Plastid</location>
        <location>Chloroplast</location>
    </subcellularLocation>
</comment>
<comment type="similarity">
    <text evidence="1">Belongs to the universal ribosomal protein uS11 family.</text>
</comment>